<feature type="initiator methionine" description="Removed" evidence="3">
    <location>
        <position position="1"/>
    </location>
</feature>
<feature type="chain" id="PRO_0000318527" description="CREB-regulated transcription coactivator 2">
    <location>
        <begin position="2"/>
        <end position="693"/>
    </location>
</feature>
<feature type="region of interest" description="Disordered" evidence="4">
    <location>
        <begin position="1"/>
        <end position="30"/>
    </location>
</feature>
<feature type="region of interest" description="Disordered" evidence="4">
    <location>
        <begin position="174"/>
        <end position="210"/>
    </location>
</feature>
<feature type="region of interest" description="Required for interaction with COP1" evidence="1">
    <location>
        <begin position="209"/>
        <end position="215"/>
    </location>
</feature>
<feature type="region of interest" description="Disordered" evidence="4">
    <location>
        <begin position="271"/>
        <end position="307"/>
    </location>
</feature>
<feature type="region of interest" description="Disordered" evidence="4">
    <location>
        <begin position="335"/>
        <end position="463"/>
    </location>
</feature>
<feature type="region of interest" description="Disordered" evidence="4">
    <location>
        <begin position="476"/>
        <end position="548"/>
    </location>
</feature>
<feature type="short sequence motif" description="Nuclear export signal" evidence="1">
    <location>
        <begin position="271"/>
        <end position="287"/>
    </location>
</feature>
<feature type="compositionally biased region" description="Polar residues" evidence="4">
    <location>
        <begin position="1"/>
        <end position="20"/>
    </location>
</feature>
<feature type="compositionally biased region" description="Polar residues" evidence="4">
    <location>
        <begin position="174"/>
        <end position="188"/>
    </location>
</feature>
<feature type="compositionally biased region" description="Polar residues" evidence="4">
    <location>
        <begin position="339"/>
        <end position="351"/>
    </location>
</feature>
<feature type="compositionally biased region" description="Low complexity" evidence="4">
    <location>
        <begin position="352"/>
        <end position="378"/>
    </location>
</feature>
<feature type="compositionally biased region" description="Low complexity" evidence="4">
    <location>
        <begin position="386"/>
        <end position="424"/>
    </location>
</feature>
<feature type="compositionally biased region" description="Polar residues" evidence="4">
    <location>
        <begin position="447"/>
        <end position="463"/>
    </location>
</feature>
<feature type="site" description="Required for ubiquitination and degradation" evidence="1">
    <location>
        <position position="629"/>
    </location>
</feature>
<feature type="modified residue" description="N-acetylalanine" evidence="3">
    <location>
        <position position="2"/>
    </location>
</feature>
<feature type="modified residue" description="Asymmetric dimethylarginine; by PRMT6" evidence="2">
    <location>
        <position position="51"/>
    </location>
</feature>
<feature type="modified residue" description="Phosphoserine" evidence="3">
    <location>
        <position position="70"/>
    </location>
</feature>
<feature type="modified residue" description="Phosphoserine" evidence="3">
    <location>
        <position position="86"/>
    </location>
</feature>
<feature type="modified residue" description="Phosphoserine" evidence="3">
    <location>
        <position position="90"/>
    </location>
</feature>
<feature type="modified residue" description="Asymmetric dimethylarginine; by PRMT6" evidence="2">
    <location>
        <position position="99"/>
    </location>
</feature>
<feature type="modified residue" description="Asymmetric dimethylarginine; by PRMT6" evidence="2">
    <location>
        <position position="120"/>
    </location>
</feature>
<feature type="modified residue" description="Asymmetric dimethylarginine; by PRMT6" evidence="2">
    <location>
        <position position="123"/>
    </location>
</feature>
<feature type="modified residue" description="Phosphoserine" evidence="3">
    <location>
        <position position="136"/>
    </location>
</feature>
<feature type="modified residue" description="Asymmetric dimethylarginine; by PRMT6" evidence="2">
    <location>
        <position position="161"/>
    </location>
</feature>
<feature type="modified residue" description="Asymmetric dimethylarginine; by PRMT6" evidence="2">
    <location>
        <position position="168"/>
    </location>
</feature>
<feature type="modified residue" description="Phosphothreonine" evidence="2">
    <location>
        <position position="169"/>
    </location>
</feature>
<feature type="modified residue" description="Phosphoserine" evidence="3">
    <location>
        <position position="171"/>
    </location>
</feature>
<feature type="modified residue" description="Phosphoserine; by MARK2" evidence="3">
    <location>
        <position position="274"/>
    </location>
</feature>
<feature type="modified residue" description="Phosphoserine" evidence="3">
    <location>
        <position position="306"/>
    </location>
</feature>
<feature type="modified residue" description="Phosphoserine" evidence="3">
    <location>
        <position position="368"/>
    </location>
</feature>
<feature type="modified residue" description="Phosphoserine" evidence="3">
    <location>
        <position position="393"/>
    </location>
</feature>
<feature type="modified residue" description="Phosphoserine" evidence="3">
    <location>
        <position position="433"/>
    </location>
</feature>
<feature type="modified residue" description="Phosphoserine" evidence="3">
    <location>
        <position position="456"/>
    </location>
</feature>
<feature type="modified residue" description="Phosphotyrosine" evidence="3">
    <location>
        <position position="488"/>
    </location>
</feature>
<feature type="modified residue" description="Phosphoserine" evidence="3">
    <location>
        <position position="489"/>
    </location>
</feature>
<feature type="modified residue" description="Phosphoserine" evidence="3">
    <location>
        <position position="492"/>
    </location>
</feature>
<feature type="modified residue" description="Phosphothreonine" evidence="3">
    <location>
        <position position="501"/>
    </location>
</feature>
<feature type="modified residue" description="Phosphoserine" evidence="3">
    <location>
        <position position="613"/>
    </location>
</feature>
<feature type="modified residue" description="Phosphoserine" evidence="3">
    <location>
        <position position="624"/>
    </location>
</feature>
<feature type="cross-link" description="Glycyl lysine isopeptide (Lys-Gly) (interchain with G-Cter in SUMO2)" evidence="3">
    <location>
        <position position="234"/>
    </location>
</feature>
<dbReference type="EMBL" id="BC123454">
    <property type="protein sequence ID" value="AAI23455.1"/>
    <property type="molecule type" value="mRNA"/>
</dbReference>
<dbReference type="RefSeq" id="NP_001069718.1">
    <property type="nucleotide sequence ID" value="NM_001076250.1"/>
</dbReference>
<dbReference type="RefSeq" id="XP_059740813.1">
    <property type="nucleotide sequence ID" value="XM_059884830.1"/>
</dbReference>
<dbReference type="SMR" id="Q08E26"/>
<dbReference type="FunCoup" id="Q08E26">
    <property type="interactions" value="2578"/>
</dbReference>
<dbReference type="STRING" id="9913.ENSBTAP00000050880"/>
<dbReference type="PaxDb" id="9913-ENSBTAP00000050880"/>
<dbReference type="PeptideAtlas" id="Q08E26"/>
<dbReference type="GeneID" id="540959"/>
<dbReference type="KEGG" id="bta:540959"/>
<dbReference type="CTD" id="200186"/>
<dbReference type="VEuPathDB" id="HostDB:ENSBTAG00000017942"/>
<dbReference type="eggNOG" id="ENOG502QVWA">
    <property type="taxonomic scope" value="Eukaryota"/>
</dbReference>
<dbReference type="HOGENOM" id="CLU_019357_1_0_1"/>
<dbReference type="InParanoid" id="Q08E26"/>
<dbReference type="OMA" id="WARHALP"/>
<dbReference type="OrthoDB" id="8947034at2759"/>
<dbReference type="TreeFam" id="TF321571"/>
<dbReference type="Proteomes" id="UP000009136">
    <property type="component" value="Chromosome 3"/>
</dbReference>
<dbReference type="Bgee" id="ENSBTAG00000017942">
    <property type="expression patterns" value="Expressed in urinary bladder and 105 other cell types or tissues"/>
</dbReference>
<dbReference type="GO" id="GO:0005737">
    <property type="term" value="C:cytoplasm"/>
    <property type="evidence" value="ECO:0000250"/>
    <property type="project" value="UniProtKB"/>
</dbReference>
<dbReference type="GO" id="GO:0005634">
    <property type="term" value="C:nucleus"/>
    <property type="evidence" value="ECO:0000250"/>
    <property type="project" value="UniProtKB"/>
</dbReference>
<dbReference type="GO" id="GO:0008140">
    <property type="term" value="F:cAMP response element binding protein binding"/>
    <property type="evidence" value="ECO:0000318"/>
    <property type="project" value="GO_Central"/>
</dbReference>
<dbReference type="GO" id="GO:0003713">
    <property type="term" value="F:transcription coactivator activity"/>
    <property type="evidence" value="ECO:0000318"/>
    <property type="project" value="GO_Central"/>
</dbReference>
<dbReference type="GO" id="GO:0071320">
    <property type="term" value="P:cellular response to cAMP"/>
    <property type="evidence" value="ECO:0000318"/>
    <property type="project" value="GO_Central"/>
</dbReference>
<dbReference type="GO" id="GO:0006094">
    <property type="term" value="P:gluconeogenesis"/>
    <property type="evidence" value="ECO:0000250"/>
    <property type="project" value="UniProtKB"/>
</dbReference>
<dbReference type="GO" id="GO:0042593">
    <property type="term" value="P:glucose homeostasis"/>
    <property type="evidence" value="ECO:0000250"/>
    <property type="project" value="UniProtKB"/>
</dbReference>
<dbReference type="GO" id="GO:0032793">
    <property type="term" value="P:positive regulation of CREB transcription factor activity"/>
    <property type="evidence" value="ECO:0000250"/>
    <property type="project" value="UniProtKB"/>
</dbReference>
<dbReference type="GO" id="GO:0045944">
    <property type="term" value="P:positive regulation of transcription by RNA polymerase II"/>
    <property type="evidence" value="ECO:0000318"/>
    <property type="project" value="GO_Central"/>
</dbReference>
<dbReference type="GO" id="GO:0051289">
    <property type="term" value="P:protein homotetramerization"/>
    <property type="evidence" value="ECO:0007669"/>
    <property type="project" value="InterPro"/>
</dbReference>
<dbReference type="InterPro" id="IPR024786">
    <property type="entry name" value="TORC"/>
</dbReference>
<dbReference type="InterPro" id="IPR024785">
    <property type="entry name" value="TORC_C"/>
</dbReference>
<dbReference type="InterPro" id="IPR024784">
    <property type="entry name" value="TORC_M"/>
</dbReference>
<dbReference type="InterPro" id="IPR024783">
    <property type="entry name" value="TORC_N"/>
</dbReference>
<dbReference type="PANTHER" id="PTHR13589">
    <property type="entry name" value="CREB-REGULATED TRANSCRIPTION COACTIVATOR"/>
    <property type="match status" value="1"/>
</dbReference>
<dbReference type="PANTHER" id="PTHR13589:SF6">
    <property type="entry name" value="CREB-REGULATED TRANSCRIPTION COACTIVATOR 2"/>
    <property type="match status" value="1"/>
</dbReference>
<dbReference type="Pfam" id="PF12886">
    <property type="entry name" value="TORC_C"/>
    <property type="match status" value="1"/>
</dbReference>
<dbReference type="Pfam" id="PF12885">
    <property type="entry name" value="TORC_M"/>
    <property type="match status" value="1"/>
</dbReference>
<dbReference type="Pfam" id="PF12884">
    <property type="entry name" value="TORC_N"/>
    <property type="match status" value="1"/>
</dbReference>
<evidence type="ECO:0000250" key="1"/>
<evidence type="ECO:0000250" key="2">
    <source>
        <dbReference type="UniProtKB" id="Q3U182"/>
    </source>
</evidence>
<evidence type="ECO:0000250" key="3">
    <source>
        <dbReference type="UniProtKB" id="Q53ET0"/>
    </source>
</evidence>
<evidence type="ECO:0000256" key="4">
    <source>
        <dbReference type="SAM" id="MobiDB-lite"/>
    </source>
</evidence>
<evidence type="ECO:0000305" key="5"/>
<sequence>MATSGANGPGSATASASNPRKFSEKIALQKQRQAEETAAFEEVMMDIGSTRLQAQKLRLAYTRSSHYGGSLPNVNQIGCGLAEFQSPLHSPLDSSRSTRHHGLVERVQRDPRRMVSPLRRYARHIDSSPYSPAYLSPPPESSWRRTMPWGSFPAEKGQLFRLPSALNRTSSDSALHTSVMNPSPQDTYPSPAAPSVLPSRRGGCLDGETDSKVPAIEENLLDDKHLLKPWDAKKLSSSSSRPRSCEVPGINIFPSPDQPATVPVLPPAMNTGGSLPDLTNLHFPPPLPTPLDPEETAYPSLSGGSSTSNLTHTMTHLGISGGLALGPGYDAPGLHSPLSHPSFQSSLSNPNLQASLSSPQPQLQGSHSHPSLPASSLARHALPTTSLGHPSLSAPALSSSSSSSSASSPVLGAPAYPASAPGASPRHRRVPLSPLSLPAGPADARRSQQQLPKQFSPTMSPTLSSITQGVALDTSKLPTDQRLPPYPYSPPSLVLPTQQPTPKPLQQPGLPSQACSVQPSGGQPPGRQLQYGTLYPPGPSGHGQQSYHRSMSDFSLGNLEQFNMENPSTSLALDPPGFSEGPGFLGGEGPVSGPQDPHALNHQNVTHCSRHGSGPNVILTGDASPGFSKEIAAALAGVPGFEVSAAGLGLGLGLEEELRMEPLGLEGLSMLSDPCALLPDPAVEDSFRSDRLQ</sequence>
<accession>Q08E26</accession>
<proteinExistence type="evidence at transcript level"/>
<name>CRTC2_BOVIN</name>
<comment type="function">
    <text evidence="3">Transcriptional coactivator for CREB1 which activates transcription through both consensus and variant cAMP response element (CRE) sites. Acts as a coactivator, in the SIK/TORC signaling pathway, being active when dephosphorylated and acts independently of CREB1 'Ser-133' phosphorylation. Enhances the interaction of CREB1 with TAF4. Regulates gluconeogenesis as a component of the LKB1/AMPK/TORC2 signaling pathway. Regulates the expression of specific genes such as the steroidogenic gene, StAR. Potent coactivator of PPARGC1A and inducer of mitochondrial biogenesis in muscle cells (By similarity).</text>
</comment>
<comment type="subunit">
    <text evidence="2 3">Binds, as a tetramer, through its N-terminal region, with the bZIP domain of CREB1. 'Arg-314' in the bZIP domain of CREB1 is essential for this interaction. Interaction, via its C-terminal, with TAF4, enhances recruitment of TAF4 to CREB1. Interacts with SIK2. Interacts with 14-3-3 proteins, YWHAB and YWHAG. Interacts (probably when phosphorylated at Ser-171) with YWHAE. Interacts with calmodulin-dependent catalytic subunit PPP3CA/calcineurin A (By similarity). Interaction with COP1 mediates nuclear export and degradation of CRTC2 (By similarity).</text>
</comment>
<comment type="subcellular location">
    <subcellularLocation>
        <location evidence="3">Cytoplasm</location>
    </subcellularLocation>
    <subcellularLocation>
        <location evidence="3">Nucleus</location>
    </subcellularLocation>
    <text evidence="3">Translocated from the nucleus to the cytoplasm on interaction of the phosphorylated form with 14-3-3 protein. In response to cAMP levels and glucagon, relocated to the nucleus.</text>
</comment>
<comment type="PTM">
    <text evidence="2 3">Phosphorylation/dephosphorylation states of Ser-171 are required for regulating transduction of CREB activity. CRTCs/TORCs are inactive when phosphorylated, and active when dephosphorylated at this site. This primary site of phosphorylation, is regulated by cAMP and calcium levels and is dependent on the phosphorylation of SIKs (SIK1 and SIK2) by LKB1 (By similarity). Following adenylyl cyclase activation, dephosphorylated at Ser-171 by PPP3CA/calcineurin A resulting in CRTC2 dissociation from 14-3-3 proteins and PPP3CA (By similarity). Both insulin and AMPK increase this phosphorylation of CRTC2 while glucagon suppresses it. Phosphorylation at Ser-274 by MARK2 is induced under low glucose conditions and dephosphorylated in response to glucose influx. Phosphorylation at Ser-274 promotes interaction with 14-3-3 proteins and translocation to the cytoplasm (By similarity).</text>
</comment>
<comment type="PTM">
    <text evidence="2">Asymmetric dimethylation of arginine resisues by PRMT6 enhances the association of CRTC2 with CREB on the promoters of gluconeogenic genes.</text>
</comment>
<comment type="similarity">
    <text evidence="5">Belongs to the TORC family.</text>
</comment>
<reference key="1">
    <citation type="submission" date="2006-09" db="EMBL/GenBank/DDBJ databases">
        <authorList>
            <consortium name="NIH - Mammalian Gene Collection (MGC) project"/>
        </authorList>
    </citation>
    <scope>NUCLEOTIDE SEQUENCE [LARGE SCALE MRNA]</scope>
</reference>
<keyword id="KW-0007">Acetylation</keyword>
<keyword id="KW-0010">Activator</keyword>
<keyword id="KW-0963">Cytoplasm</keyword>
<keyword id="KW-1017">Isopeptide bond</keyword>
<keyword id="KW-0488">Methylation</keyword>
<keyword id="KW-0539">Nucleus</keyword>
<keyword id="KW-0597">Phosphoprotein</keyword>
<keyword id="KW-1185">Reference proteome</keyword>
<keyword id="KW-0804">Transcription</keyword>
<keyword id="KW-0805">Transcription regulation</keyword>
<keyword id="KW-0832">Ubl conjugation</keyword>
<protein>
    <recommendedName>
        <fullName>CREB-regulated transcription coactivator 2</fullName>
    </recommendedName>
    <alternativeName>
        <fullName>Transducer of regulated cAMP response element-binding protein 2</fullName>
        <shortName>TORC-2</shortName>
        <shortName>Transducer of CREB protein 2</shortName>
    </alternativeName>
</protein>
<gene>
    <name type="primary">CRTC2</name>
    <name type="synonym">TORC2</name>
</gene>
<organism>
    <name type="scientific">Bos taurus</name>
    <name type="common">Bovine</name>
    <dbReference type="NCBI Taxonomy" id="9913"/>
    <lineage>
        <taxon>Eukaryota</taxon>
        <taxon>Metazoa</taxon>
        <taxon>Chordata</taxon>
        <taxon>Craniata</taxon>
        <taxon>Vertebrata</taxon>
        <taxon>Euteleostomi</taxon>
        <taxon>Mammalia</taxon>
        <taxon>Eutheria</taxon>
        <taxon>Laurasiatheria</taxon>
        <taxon>Artiodactyla</taxon>
        <taxon>Ruminantia</taxon>
        <taxon>Pecora</taxon>
        <taxon>Bovidae</taxon>
        <taxon>Bovinae</taxon>
        <taxon>Bos</taxon>
    </lineage>
</organism>